<sequence length="288" mass="30864">MRIRVPATSANLGPGFDSCGLALTLYLTLDIGGEAETWYIEHDIGGGIPHDETNVIIETALHLAPNLTPHHLVMTCDIPPARGLGSSSAAVVAGIELANTLAELNLSKEEKVRIAAEIEGHPDNVAPAVLGNWVVGAKLDGEDFYVRHLFPDCALIAFIPKKELLTSESRGVLPDALPFKEAVQASSIANVMIAAILRNDMTLAGEMMERDLWHEKYRSKLVPHLTQIREVAKSKGAYAACLSGAGPTVLVFAPRNIANTLQASLQTLEIDADVLLLDIEGSGAEVFY</sequence>
<name>KHSE_LISW6</name>
<comment type="function">
    <text evidence="1">Catalyzes the ATP-dependent phosphorylation of L-homoserine to L-homoserine phosphate.</text>
</comment>
<comment type="catalytic activity">
    <reaction evidence="1">
        <text>L-homoserine + ATP = O-phospho-L-homoserine + ADP + H(+)</text>
        <dbReference type="Rhea" id="RHEA:13985"/>
        <dbReference type="ChEBI" id="CHEBI:15378"/>
        <dbReference type="ChEBI" id="CHEBI:30616"/>
        <dbReference type="ChEBI" id="CHEBI:57476"/>
        <dbReference type="ChEBI" id="CHEBI:57590"/>
        <dbReference type="ChEBI" id="CHEBI:456216"/>
        <dbReference type="EC" id="2.7.1.39"/>
    </reaction>
</comment>
<comment type="pathway">
    <text evidence="1">Amino-acid biosynthesis; L-threonine biosynthesis; L-threonine from L-aspartate: step 4/5.</text>
</comment>
<comment type="subcellular location">
    <subcellularLocation>
        <location evidence="1">Cytoplasm</location>
    </subcellularLocation>
</comment>
<comment type="similarity">
    <text evidence="1">Belongs to the GHMP kinase family. Homoserine kinase subfamily.</text>
</comment>
<keyword id="KW-0028">Amino-acid biosynthesis</keyword>
<keyword id="KW-0067">ATP-binding</keyword>
<keyword id="KW-0963">Cytoplasm</keyword>
<keyword id="KW-0418">Kinase</keyword>
<keyword id="KW-0547">Nucleotide-binding</keyword>
<keyword id="KW-0791">Threonine biosynthesis</keyword>
<keyword id="KW-0808">Transferase</keyword>
<reference key="1">
    <citation type="journal article" date="2006" name="J. Bacteriol.">
        <title>Whole-genome sequence of Listeria welshimeri reveals common steps in genome reduction with Listeria innocua as compared to Listeria monocytogenes.</title>
        <authorList>
            <person name="Hain T."/>
            <person name="Steinweg C."/>
            <person name="Kuenne C.T."/>
            <person name="Billion A."/>
            <person name="Ghai R."/>
            <person name="Chatterjee S.S."/>
            <person name="Domann E."/>
            <person name="Kaerst U."/>
            <person name="Goesmann A."/>
            <person name="Bekel T."/>
            <person name="Bartels D."/>
            <person name="Kaiser O."/>
            <person name="Meyer F."/>
            <person name="Puehler A."/>
            <person name="Weisshaar B."/>
            <person name="Wehland J."/>
            <person name="Liang C."/>
            <person name="Dandekar T."/>
            <person name="Lampidis R."/>
            <person name="Kreft J."/>
            <person name="Goebel W."/>
            <person name="Chakraborty T."/>
        </authorList>
    </citation>
    <scope>NUCLEOTIDE SEQUENCE [LARGE SCALE GENOMIC DNA]</scope>
    <source>
        <strain>ATCC 35897 / DSM 20650 / CCUG 15529 / CIP 8149 / NCTC 11857 / SLCC 5334 / V8</strain>
    </source>
</reference>
<organism>
    <name type="scientific">Listeria welshimeri serovar 6b (strain ATCC 35897 / DSM 20650 / CCUG 15529 / CIP 8149 / NCTC 11857 / SLCC 5334 / V8)</name>
    <dbReference type="NCBI Taxonomy" id="386043"/>
    <lineage>
        <taxon>Bacteria</taxon>
        <taxon>Bacillati</taxon>
        <taxon>Bacillota</taxon>
        <taxon>Bacilli</taxon>
        <taxon>Bacillales</taxon>
        <taxon>Listeriaceae</taxon>
        <taxon>Listeria</taxon>
    </lineage>
</organism>
<gene>
    <name evidence="1" type="primary">thrB</name>
    <name type="ordered locus">lwe2494</name>
</gene>
<accession>A0ALN0</accession>
<proteinExistence type="inferred from homology"/>
<protein>
    <recommendedName>
        <fullName evidence="1">Homoserine kinase</fullName>
        <shortName evidence="1">HK</shortName>
        <shortName evidence="1">HSK</shortName>
        <ecNumber evidence="1">2.7.1.39</ecNumber>
    </recommendedName>
</protein>
<feature type="chain" id="PRO_1000049141" description="Homoserine kinase">
    <location>
        <begin position="1"/>
        <end position="288"/>
    </location>
</feature>
<feature type="binding site" evidence="1">
    <location>
        <begin position="79"/>
        <end position="89"/>
    </location>
    <ligand>
        <name>ATP</name>
        <dbReference type="ChEBI" id="CHEBI:30616"/>
    </ligand>
</feature>
<dbReference type="EC" id="2.7.1.39" evidence="1"/>
<dbReference type="EMBL" id="AM263198">
    <property type="protein sequence ID" value="CAK21912.1"/>
    <property type="molecule type" value="Genomic_DNA"/>
</dbReference>
<dbReference type="RefSeq" id="WP_011703222.1">
    <property type="nucleotide sequence ID" value="NC_008555.1"/>
</dbReference>
<dbReference type="SMR" id="A0ALN0"/>
<dbReference type="STRING" id="386043.lwe2494"/>
<dbReference type="GeneID" id="61190413"/>
<dbReference type="KEGG" id="lwe:lwe2494"/>
<dbReference type="eggNOG" id="COG0083">
    <property type="taxonomic scope" value="Bacteria"/>
</dbReference>
<dbReference type="HOGENOM" id="CLU_041243_0_0_9"/>
<dbReference type="OrthoDB" id="9769912at2"/>
<dbReference type="UniPathway" id="UPA00050">
    <property type="reaction ID" value="UER00064"/>
</dbReference>
<dbReference type="Proteomes" id="UP000000779">
    <property type="component" value="Chromosome"/>
</dbReference>
<dbReference type="GO" id="GO:0005737">
    <property type="term" value="C:cytoplasm"/>
    <property type="evidence" value="ECO:0007669"/>
    <property type="project" value="UniProtKB-SubCell"/>
</dbReference>
<dbReference type="GO" id="GO:0005524">
    <property type="term" value="F:ATP binding"/>
    <property type="evidence" value="ECO:0007669"/>
    <property type="project" value="UniProtKB-UniRule"/>
</dbReference>
<dbReference type="GO" id="GO:0004413">
    <property type="term" value="F:homoserine kinase activity"/>
    <property type="evidence" value="ECO:0007669"/>
    <property type="project" value="UniProtKB-UniRule"/>
</dbReference>
<dbReference type="GO" id="GO:0009088">
    <property type="term" value="P:threonine biosynthetic process"/>
    <property type="evidence" value="ECO:0007669"/>
    <property type="project" value="UniProtKB-UniRule"/>
</dbReference>
<dbReference type="Gene3D" id="3.30.230.10">
    <property type="match status" value="1"/>
</dbReference>
<dbReference type="Gene3D" id="3.30.70.890">
    <property type="entry name" value="GHMP kinase, C-terminal domain"/>
    <property type="match status" value="1"/>
</dbReference>
<dbReference type="HAMAP" id="MF_00384">
    <property type="entry name" value="Homoser_kinase"/>
    <property type="match status" value="1"/>
</dbReference>
<dbReference type="InterPro" id="IPR013750">
    <property type="entry name" value="GHMP_kinase_C_dom"/>
</dbReference>
<dbReference type="InterPro" id="IPR036554">
    <property type="entry name" value="GHMP_kinase_C_sf"/>
</dbReference>
<dbReference type="InterPro" id="IPR006204">
    <property type="entry name" value="GHMP_kinase_N_dom"/>
</dbReference>
<dbReference type="InterPro" id="IPR006203">
    <property type="entry name" value="GHMP_knse_ATP-bd_CS"/>
</dbReference>
<dbReference type="InterPro" id="IPR000870">
    <property type="entry name" value="Homoserine_kinase"/>
</dbReference>
<dbReference type="InterPro" id="IPR020568">
    <property type="entry name" value="Ribosomal_Su5_D2-typ_SF"/>
</dbReference>
<dbReference type="InterPro" id="IPR014721">
    <property type="entry name" value="Ribsml_uS5_D2-typ_fold_subgr"/>
</dbReference>
<dbReference type="NCBIfam" id="TIGR00191">
    <property type="entry name" value="thrB"/>
    <property type="match status" value="1"/>
</dbReference>
<dbReference type="PANTHER" id="PTHR20861:SF1">
    <property type="entry name" value="HOMOSERINE KINASE"/>
    <property type="match status" value="1"/>
</dbReference>
<dbReference type="PANTHER" id="PTHR20861">
    <property type="entry name" value="HOMOSERINE/4-DIPHOSPHOCYTIDYL-2-C-METHYL-D-ERYTHRITOL KINASE"/>
    <property type="match status" value="1"/>
</dbReference>
<dbReference type="Pfam" id="PF08544">
    <property type="entry name" value="GHMP_kinases_C"/>
    <property type="match status" value="1"/>
</dbReference>
<dbReference type="Pfam" id="PF00288">
    <property type="entry name" value="GHMP_kinases_N"/>
    <property type="match status" value="1"/>
</dbReference>
<dbReference type="PIRSF" id="PIRSF000676">
    <property type="entry name" value="Homoser_kin"/>
    <property type="match status" value="1"/>
</dbReference>
<dbReference type="PRINTS" id="PR00958">
    <property type="entry name" value="HOMSERKINASE"/>
</dbReference>
<dbReference type="SUPFAM" id="SSF55060">
    <property type="entry name" value="GHMP Kinase, C-terminal domain"/>
    <property type="match status" value="1"/>
</dbReference>
<dbReference type="SUPFAM" id="SSF54211">
    <property type="entry name" value="Ribosomal protein S5 domain 2-like"/>
    <property type="match status" value="1"/>
</dbReference>
<dbReference type="PROSITE" id="PS00627">
    <property type="entry name" value="GHMP_KINASES_ATP"/>
    <property type="match status" value="1"/>
</dbReference>
<evidence type="ECO:0000255" key="1">
    <source>
        <dbReference type="HAMAP-Rule" id="MF_00384"/>
    </source>
</evidence>